<evidence type="ECO:0000255" key="1">
    <source>
        <dbReference type="HAMAP-Rule" id="MF_00012"/>
    </source>
</evidence>
<protein>
    <recommendedName>
        <fullName evidence="1">Dihydroxy-acid dehydratase</fullName>
        <shortName evidence="1">DAD</shortName>
        <ecNumber evidence="1">4.2.1.9</ecNumber>
    </recommendedName>
</protein>
<keyword id="KW-0001">2Fe-2S</keyword>
<keyword id="KW-0028">Amino-acid biosynthesis</keyword>
<keyword id="KW-0100">Branched-chain amino acid biosynthesis</keyword>
<keyword id="KW-0408">Iron</keyword>
<keyword id="KW-0411">Iron-sulfur</keyword>
<keyword id="KW-0456">Lyase</keyword>
<keyword id="KW-0460">Magnesium</keyword>
<keyword id="KW-0479">Metal-binding</keyword>
<sequence length="619" mass="65588">MPKLRSATSTEGRNMAGARALWRATGVKDNDFGKPIIAIANSFTQFVPGHVHLKDMGSLVAGAIEEAGGIAKEFNTIAVDDGIAMGHGGMLYSLPSRELIADSVEYMVNAHCADALVCISNCDKITPGMLMAALRLNIPVVFVSGGPMEAGKTKLSDKLIKLDLVDAMVAAADSSVSDEDSAKIERSACPTCGSCSGMFTANSMNCLTEALGLSLPGNGSMLATHSDRRELFLEAGRRVMALTKRYYEQDDVSALPRNIASFKAFENAMALDIAMGGSSNTVLHLLAAAQEADVAFTMDDIDRMSRQVPHLCKVAPSTAKYHMEDVHRAGGVMGILGELDRAGLLHTDVPHVAADAGGNLKSVLAKYDVMQTQDDKVKQFFMAGPAGIPTTKAFSQDCRWPSLDDDRREGCIRSREFAFSQEGGLAVLSGNLADNGCIVKTAGVDESNLTFTGSARVYESQDDAVAGILGGEVVAGDVVVIRYEGPKGGPGMQEMLYPTSYLKSRGLGKACALITDGRFSGGTSGLSIGHVSPEAAAGGTIALIENGDRIEIDIPKRSIKLAVSDAELAARRETMLARGPMAWKPLSRQRYVSMALKAYAMLATSADKGAVRDRSKLED</sequence>
<proteinExistence type="inferred from homology"/>
<dbReference type="EC" id="4.2.1.9" evidence="1"/>
<dbReference type="EMBL" id="CP000444">
    <property type="protein sequence ID" value="ABI44642.1"/>
    <property type="molecule type" value="Genomic_DNA"/>
</dbReference>
<dbReference type="SMR" id="Q0HQG3"/>
<dbReference type="KEGG" id="shm:Shewmr7_3662"/>
<dbReference type="HOGENOM" id="CLU_014271_4_2_6"/>
<dbReference type="UniPathway" id="UPA00047">
    <property type="reaction ID" value="UER00057"/>
</dbReference>
<dbReference type="UniPathway" id="UPA00049">
    <property type="reaction ID" value="UER00061"/>
</dbReference>
<dbReference type="GO" id="GO:0005829">
    <property type="term" value="C:cytosol"/>
    <property type="evidence" value="ECO:0007669"/>
    <property type="project" value="TreeGrafter"/>
</dbReference>
<dbReference type="GO" id="GO:0051537">
    <property type="term" value="F:2 iron, 2 sulfur cluster binding"/>
    <property type="evidence" value="ECO:0007669"/>
    <property type="project" value="UniProtKB-UniRule"/>
</dbReference>
<dbReference type="GO" id="GO:0004160">
    <property type="term" value="F:dihydroxy-acid dehydratase activity"/>
    <property type="evidence" value="ECO:0007669"/>
    <property type="project" value="UniProtKB-UniRule"/>
</dbReference>
<dbReference type="GO" id="GO:0000287">
    <property type="term" value="F:magnesium ion binding"/>
    <property type="evidence" value="ECO:0007669"/>
    <property type="project" value="UniProtKB-UniRule"/>
</dbReference>
<dbReference type="GO" id="GO:0009097">
    <property type="term" value="P:isoleucine biosynthetic process"/>
    <property type="evidence" value="ECO:0007669"/>
    <property type="project" value="UniProtKB-UniRule"/>
</dbReference>
<dbReference type="GO" id="GO:0009099">
    <property type="term" value="P:L-valine biosynthetic process"/>
    <property type="evidence" value="ECO:0007669"/>
    <property type="project" value="UniProtKB-UniRule"/>
</dbReference>
<dbReference type="FunFam" id="3.50.30.80:FF:000001">
    <property type="entry name" value="Dihydroxy-acid dehydratase"/>
    <property type="match status" value="1"/>
</dbReference>
<dbReference type="Gene3D" id="3.50.30.80">
    <property type="entry name" value="IlvD/EDD C-terminal domain-like"/>
    <property type="match status" value="1"/>
</dbReference>
<dbReference type="HAMAP" id="MF_00012">
    <property type="entry name" value="IlvD"/>
    <property type="match status" value="1"/>
</dbReference>
<dbReference type="InterPro" id="IPR042096">
    <property type="entry name" value="Dihydro-acid_dehy_C"/>
</dbReference>
<dbReference type="InterPro" id="IPR004404">
    <property type="entry name" value="DihydroxyA_deHydtase"/>
</dbReference>
<dbReference type="InterPro" id="IPR020558">
    <property type="entry name" value="DiOHA_6PGluconate_deHydtase_CS"/>
</dbReference>
<dbReference type="InterPro" id="IPR056740">
    <property type="entry name" value="ILV_EDD_C"/>
</dbReference>
<dbReference type="InterPro" id="IPR000581">
    <property type="entry name" value="ILV_EDD_N"/>
</dbReference>
<dbReference type="InterPro" id="IPR037237">
    <property type="entry name" value="IlvD/EDD_N"/>
</dbReference>
<dbReference type="NCBIfam" id="TIGR00110">
    <property type="entry name" value="ilvD"/>
    <property type="match status" value="1"/>
</dbReference>
<dbReference type="NCBIfam" id="NF009103">
    <property type="entry name" value="PRK12448.1"/>
    <property type="match status" value="1"/>
</dbReference>
<dbReference type="PANTHER" id="PTHR43661">
    <property type="entry name" value="D-XYLONATE DEHYDRATASE"/>
    <property type="match status" value="1"/>
</dbReference>
<dbReference type="PANTHER" id="PTHR43661:SF3">
    <property type="entry name" value="D-XYLONATE DEHYDRATASE YAGF-RELATED"/>
    <property type="match status" value="1"/>
</dbReference>
<dbReference type="Pfam" id="PF24877">
    <property type="entry name" value="ILV_EDD_C"/>
    <property type="match status" value="1"/>
</dbReference>
<dbReference type="Pfam" id="PF00920">
    <property type="entry name" value="ILVD_EDD_N"/>
    <property type="match status" value="1"/>
</dbReference>
<dbReference type="SUPFAM" id="SSF143975">
    <property type="entry name" value="IlvD/EDD N-terminal domain-like"/>
    <property type="match status" value="1"/>
</dbReference>
<dbReference type="SUPFAM" id="SSF52016">
    <property type="entry name" value="LeuD/IlvD-like"/>
    <property type="match status" value="1"/>
</dbReference>
<dbReference type="PROSITE" id="PS00886">
    <property type="entry name" value="ILVD_EDD_1"/>
    <property type="match status" value="1"/>
</dbReference>
<dbReference type="PROSITE" id="PS00887">
    <property type="entry name" value="ILVD_EDD_2"/>
    <property type="match status" value="1"/>
</dbReference>
<name>ILVD_SHESR</name>
<accession>Q0HQG3</accession>
<feature type="chain" id="PRO_1000001058" description="Dihydroxy-acid dehydratase">
    <location>
        <begin position="1"/>
        <end position="619"/>
    </location>
</feature>
<feature type="active site" description="Proton acceptor" evidence="1">
    <location>
        <position position="520"/>
    </location>
</feature>
<feature type="binding site" evidence="1">
    <location>
        <position position="81"/>
    </location>
    <ligand>
        <name>Mg(2+)</name>
        <dbReference type="ChEBI" id="CHEBI:18420"/>
    </ligand>
</feature>
<feature type="binding site" evidence="1">
    <location>
        <position position="122"/>
    </location>
    <ligand>
        <name>[2Fe-2S] cluster</name>
        <dbReference type="ChEBI" id="CHEBI:190135"/>
    </ligand>
</feature>
<feature type="binding site" evidence="1">
    <location>
        <position position="123"/>
    </location>
    <ligand>
        <name>Mg(2+)</name>
        <dbReference type="ChEBI" id="CHEBI:18420"/>
    </ligand>
</feature>
<feature type="binding site" description="via carbamate group" evidence="1">
    <location>
        <position position="124"/>
    </location>
    <ligand>
        <name>Mg(2+)</name>
        <dbReference type="ChEBI" id="CHEBI:18420"/>
    </ligand>
</feature>
<feature type="binding site" evidence="1">
    <location>
        <position position="195"/>
    </location>
    <ligand>
        <name>[2Fe-2S] cluster</name>
        <dbReference type="ChEBI" id="CHEBI:190135"/>
    </ligand>
</feature>
<feature type="binding site" evidence="1">
    <location>
        <position position="494"/>
    </location>
    <ligand>
        <name>Mg(2+)</name>
        <dbReference type="ChEBI" id="CHEBI:18420"/>
    </ligand>
</feature>
<feature type="modified residue" description="N6-carboxylysine" evidence="1">
    <location>
        <position position="124"/>
    </location>
</feature>
<reference key="1">
    <citation type="submission" date="2006-08" db="EMBL/GenBank/DDBJ databases">
        <title>Complete sequence of chromosome 1 of Shewanella sp. MR-7.</title>
        <authorList>
            <person name="Copeland A."/>
            <person name="Lucas S."/>
            <person name="Lapidus A."/>
            <person name="Barry K."/>
            <person name="Detter J.C."/>
            <person name="Glavina del Rio T."/>
            <person name="Hammon N."/>
            <person name="Israni S."/>
            <person name="Dalin E."/>
            <person name="Tice H."/>
            <person name="Pitluck S."/>
            <person name="Kiss H."/>
            <person name="Brettin T."/>
            <person name="Bruce D."/>
            <person name="Han C."/>
            <person name="Tapia R."/>
            <person name="Gilna P."/>
            <person name="Schmutz J."/>
            <person name="Larimer F."/>
            <person name="Land M."/>
            <person name="Hauser L."/>
            <person name="Kyrpides N."/>
            <person name="Mikhailova N."/>
            <person name="Nealson K."/>
            <person name="Konstantinidis K."/>
            <person name="Klappenbach J."/>
            <person name="Tiedje J."/>
            <person name="Richardson P."/>
        </authorList>
    </citation>
    <scope>NUCLEOTIDE SEQUENCE [LARGE SCALE GENOMIC DNA]</scope>
    <source>
        <strain>MR-7</strain>
    </source>
</reference>
<gene>
    <name evidence="1" type="primary">ilvD</name>
    <name type="ordered locus">Shewmr7_3662</name>
</gene>
<comment type="function">
    <text evidence="1">Functions in the biosynthesis of branched-chain amino acids. Catalyzes the dehydration of (2R,3R)-2,3-dihydroxy-3-methylpentanoate (2,3-dihydroxy-3-methylvalerate) into 2-oxo-3-methylpentanoate (2-oxo-3-methylvalerate) and of (2R)-2,3-dihydroxy-3-methylbutanoate (2,3-dihydroxyisovalerate) into 2-oxo-3-methylbutanoate (2-oxoisovalerate), the penultimate precursor to L-isoleucine and L-valine, respectively.</text>
</comment>
<comment type="catalytic activity">
    <reaction evidence="1">
        <text>(2R)-2,3-dihydroxy-3-methylbutanoate = 3-methyl-2-oxobutanoate + H2O</text>
        <dbReference type="Rhea" id="RHEA:24809"/>
        <dbReference type="ChEBI" id="CHEBI:11851"/>
        <dbReference type="ChEBI" id="CHEBI:15377"/>
        <dbReference type="ChEBI" id="CHEBI:49072"/>
        <dbReference type="EC" id="4.2.1.9"/>
    </reaction>
    <physiologicalReaction direction="left-to-right" evidence="1">
        <dbReference type="Rhea" id="RHEA:24810"/>
    </physiologicalReaction>
</comment>
<comment type="catalytic activity">
    <reaction evidence="1">
        <text>(2R,3R)-2,3-dihydroxy-3-methylpentanoate = (S)-3-methyl-2-oxopentanoate + H2O</text>
        <dbReference type="Rhea" id="RHEA:27694"/>
        <dbReference type="ChEBI" id="CHEBI:15377"/>
        <dbReference type="ChEBI" id="CHEBI:35146"/>
        <dbReference type="ChEBI" id="CHEBI:49258"/>
        <dbReference type="EC" id="4.2.1.9"/>
    </reaction>
    <physiologicalReaction direction="left-to-right" evidence="1">
        <dbReference type="Rhea" id="RHEA:27695"/>
    </physiologicalReaction>
</comment>
<comment type="cofactor">
    <cofactor evidence="1">
        <name>[2Fe-2S] cluster</name>
        <dbReference type="ChEBI" id="CHEBI:190135"/>
    </cofactor>
    <text evidence="1">Binds 1 [2Fe-2S] cluster per subunit. This cluster acts as a Lewis acid cofactor.</text>
</comment>
<comment type="cofactor">
    <cofactor evidence="1">
        <name>Mg(2+)</name>
        <dbReference type="ChEBI" id="CHEBI:18420"/>
    </cofactor>
</comment>
<comment type="pathway">
    <text evidence="1">Amino-acid biosynthesis; L-isoleucine biosynthesis; L-isoleucine from 2-oxobutanoate: step 3/4.</text>
</comment>
<comment type="pathway">
    <text evidence="1">Amino-acid biosynthesis; L-valine biosynthesis; L-valine from pyruvate: step 3/4.</text>
</comment>
<comment type="subunit">
    <text evidence="1">Homodimer.</text>
</comment>
<comment type="similarity">
    <text evidence="1">Belongs to the IlvD/Edd family.</text>
</comment>
<organism>
    <name type="scientific">Shewanella sp. (strain MR-7)</name>
    <dbReference type="NCBI Taxonomy" id="60481"/>
    <lineage>
        <taxon>Bacteria</taxon>
        <taxon>Pseudomonadati</taxon>
        <taxon>Pseudomonadota</taxon>
        <taxon>Gammaproteobacteria</taxon>
        <taxon>Alteromonadales</taxon>
        <taxon>Shewanellaceae</taxon>
        <taxon>Shewanella</taxon>
    </lineage>
</organism>